<dbReference type="EC" id="2.7.7.48" evidence="2"/>
<dbReference type="EC" id="3.6.1.-" evidence="1"/>
<dbReference type="EC" id="2.7.7.88" evidence="1"/>
<dbReference type="EC" id="2.1.1.375" evidence="1"/>
<dbReference type="EMBL" id="L40883">
    <property type="protein sequence ID" value="AAC42155.1"/>
    <property type="molecule type" value="Genomic_RNA"/>
</dbReference>
<dbReference type="RefSeq" id="NP_042681.1">
    <property type="nucleotide sequence ID" value="NC_001652.1"/>
</dbReference>
<dbReference type="SMR" id="Q82685"/>
<dbReference type="GeneID" id="1489850"/>
<dbReference type="KEGG" id="vg:1489850"/>
<dbReference type="Proteomes" id="UP000007212">
    <property type="component" value="Segment"/>
</dbReference>
<dbReference type="GO" id="GO:0030430">
    <property type="term" value="C:host cell cytoplasm"/>
    <property type="evidence" value="ECO:0007669"/>
    <property type="project" value="UniProtKB-SubCell"/>
</dbReference>
<dbReference type="GO" id="GO:0044423">
    <property type="term" value="C:virion component"/>
    <property type="evidence" value="ECO:0007669"/>
    <property type="project" value="UniProtKB-KW"/>
</dbReference>
<dbReference type="GO" id="GO:0005524">
    <property type="term" value="F:ATP binding"/>
    <property type="evidence" value="ECO:0007669"/>
    <property type="project" value="UniProtKB-KW"/>
</dbReference>
<dbReference type="GO" id="GO:0003924">
    <property type="term" value="F:GTPase activity"/>
    <property type="evidence" value="ECO:0007669"/>
    <property type="project" value="RHEA"/>
</dbReference>
<dbReference type="GO" id="GO:0004482">
    <property type="term" value="F:mRNA 5'-cap (guanine-N7-)-methyltransferase activity"/>
    <property type="evidence" value="ECO:0007669"/>
    <property type="project" value="InterPro"/>
</dbReference>
<dbReference type="GO" id="GO:0003968">
    <property type="term" value="F:RNA-directed RNA polymerase activity"/>
    <property type="evidence" value="ECO:0007669"/>
    <property type="project" value="UniProtKB-KW"/>
</dbReference>
<dbReference type="InterPro" id="IPR026890">
    <property type="entry name" value="Mononeg_mRNAcap"/>
</dbReference>
<dbReference type="InterPro" id="IPR014023">
    <property type="entry name" value="Mononeg_RNA_pol_cat"/>
</dbReference>
<dbReference type="InterPro" id="IPR025786">
    <property type="entry name" value="Mononega_L_MeTrfase"/>
</dbReference>
<dbReference type="Pfam" id="PF14318">
    <property type="entry name" value="Mononeg_mRNAcap"/>
    <property type="match status" value="1"/>
</dbReference>
<dbReference type="Pfam" id="PF00946">
    <property type="entry name" value="Mononeg_RNA_pol"/>
    <property type="match status" value="1"/>
</dbReference>
<dbReference type="PROSITE" id="PS50526">
    <property type="entry name" value="RDRP_SSRNA_NEG_NONSEG"/>
    <property type="match status" value="1"/>
</dbReference>
<dbReference type="PROSITE" id="PS51590">
    <property type="entry name" value="SAM_MT_MNV_L"/>
    <property type="match status" value="1"/>
</dbReference>
<organism>
    <name type="scientific">Infectious hematopoietic necrosis virus (strain WRAC)</name>
    <name type="common">IHNV</name>
    <dbReference type="NCBI Taxonomy" id="429314"/>
    <lineage>
        <taxon>Viruses</taxon>
        <taxon>Riboviria</taxon>
        <taxon>Orthornavirae</taxon>
        <taxon>Negarnaviricota</taxon>
        <taxon>Haploviricotina</taxon>
        <taxon>Monjiviricetes</taxon>
        <taxon>Mononegavirales</taxon>
        <taxon>Rhabdoviridae</taxon>
        <taxon>Gammarhabdovirinae</taxon>
        <taxon>Novirhabdovirus</taxon>
        <taxon>Novirhabdovirus salmonid</taxon>
    </lineage>
</organism>
<reference key="1">
    <citation type="journal article" date="1995" name="Virus Res.">
        <title>The complete genome structure and phylogenetic relationship of infectious hematopoietic necrosis virus.</title>
        <authorList>
            <person name="Morzunov S.P."/>
            <person name="Winton J.R."/>
            <person name="Nichol S.T."/>
        </authorList>
    </citation>
    <scope>NUCLEOTIDE SEQUENCE [GENOMIC RNA]</scope>
</reference>
<gene>
    <name type="primary">L</name>
</gene>
<organismHost>
    <name type="scientific">Salmo</name>
    <dbReference type="NCBI Taxonomy" id="8028"/>
</organismHost>
<sequence length="1986" mass="225243">MDFFDLDIEIKQERLPAECSLNSPLNYSLSAQLTDRMTPRTENVRRQRERLRSHMREHFRVKDLSTLDNDSTRLHARLTEDLITIQSPEIDSSVLENWPPLKSYIASLDYTLPEKTAFKWEQAAPYWNLFAQLRAILLQSQKIKKQETGTRELYSCVPLQIEFVEGVVLYFTDRGSKEEFTKSGELPSVTPYADFLAWIKIISQRAQAVLMAVILRVTDKGLSPLPESLLAIYQNVDDILKRAGQPAIDLLKLWEPLVITKLGELLGDRFGLEEDFRNTIRGEATKLAKNLFISRGLNRLMDILDQQTDAQPLFQFFGLFKHFAYPRVFSRDTIQAIQEVSDRPSSISAVDFLHDQCEIRKEFYIRYINAYHRAPGLDLSALSPSSFLRDSLERGKIPNERSPLYSNKEWYFVKFTKSIEWPVSDTLSTFLSDKAITRDRPAWIEDGHSGRDMSEKRLLLKFIKENFSSVADIVGAAEAIYNKEEDLLIALKVKEMELKIKGRGFGLMTFMPRLLQVLRESIAKKTQKLFPEITMTSSDLDMKKRKFMLSKKSDDRRGFIHVNKSLDINKFCTSQRQFNSNAVFSSLDELMGTFPLFSRVHEIFEKTWIVDGSSSDPPNLAHFTRILDECTALGLDTPHIWADGVFSGLKGGIEGLCQYVWTICLLLRVERVMQKTALTHYILAQGDNVIITIIVPVEIHRDGTIPEQESRRILSLSREIDLSLESELEKSGLTLKIEETLTSENISIYGKDLHCPQHLTLAIKKAASAAIISSEQYQDVPTFLSGLGTSLEALSECVNNKVGVHLFGVIMGVAGWRDLATHQTWRGWRYPYHKKAITGRIRASEMKLSKGEPTELSISVLSKRRRERETLIELLSNSLLGSALGMLAFPTPLDLEKRGVGDYITHRLTIARKAILSGHLDPRIGRKVESACNIPLSSRTDLSKLFDSPFSLNIATEEDATAVIKRQATKILRLQEIKNEKLRAQIDNMDKGIATLDAALAGATNINPRLNYMIRSITDEKESEMFVTKFASARTMRTLAMNHSSELPIVTLLEMKSQQKETYTIWRTKRPPVTMWKCSTVLAKELRDTSWGKNIIGGTSPSPIEAMETIQIDPTEWEDRRSQDAMSINYYLSRAGMDEQTAKLTRGFLVPYYGTQTKPLVAKAYLELKGNPRTNKALLLLSVRESLVKTGSNLDKLIIKLCSHALDIDVASLPALRAQEEAAAGEGLRGGIKESMSPVGPDNFYTNITHKVFNRKWATPYHVNIADFIIQGLIETRRHLLVNERMNGLLPVSSVKCTSCFREKEREFFDIPEEFTWKNESKTSDPAYTYFTTWCDLPRVSNLPEMDQRSATRLLGRGLALNRSSSGEIITKFYSMPMESQRLLHPVELLLGYGEGVIFGYLRSQHINHGALFHIGDESLAKKLRRYVLDTKTQHAKQIGYLFQDEDSLHELLGQGLCPYIPRSIPLTITELTNACAITTIRATEVILSTKTRIHHMPVQAIDESDVDTSRLAANNMQTILGDPRPMNLVHLDCDLTHNMVAWESEVELDILKSENFHIDGLLVELTARELPIGDTPWKQRDWTCSNDPKIIAKGIKTKSLFIHQGVTGAINLIPDLLVVIGGGLGGCAVPYLQEWPDTPIIFATLFDERERISEDGDLIVPPELLVRGMAPRMIEREILEAELCDITNEGNRRLLIRLVTKNKRGGKVVLIDEIENRGAPESLLQSSLQDLFEKLDKVCKLNSVHTVRESTVEQFSQRVNSIKRSRKAVTLHWNRYNRRDQFEALVIVKGEEAKSDYRISTITSAKAFRKIDEQLEIDGRLSSTQWSLPALPSREKNILFGYVSSVFLKMNLALSANDMDRERLIETIEGTAPGLISWKEKLEHRDHAHRSDIEEKGITQDKIFNLICLSWVLKGLRYGVWDTDAQSIVAQTVYITRGPKLCPLGEKPKRIFASFKLQSGKRVEDAKGFLSALLHLEGFFPLGEQ</sequence>
<name>L_IHNVW</name>
<comment type="function">
    <text evidence="1">RNA-directed RNA polymerase that catalyzes the transcription of viral mRNAs, their capping and polyadenylation. The template is composed of the viral RNA tightly encapsidated by the nucleoprotein (N). The viral polymerase binds to the genomic RNA at the 3' leader promoter, and transcribes subsequently all viral mRNAs with a decreasing efficiency. The first gene is the most transcribed, and the last the least transcribed. The viral phosphoprotein acts as a processivity factor. Capping is concomitant with initiation of mRNA transcription. Indeed, a GDP polyribonucleotidyl transferase (PRNTase) adds the cap structure when the nascent RNA chain length has reached few nucleotides. Ribose 2'-O methylation of viral mRNA cap precedes and facilitates subsequent guanine-N-7 methylation, both activities being carried by the viral polymerase. Polyadenylation of mRNAs occur by a stuttering mechanism at a slipery stop site present at the end viral genes. After finishing transcription of a mRNA, the polymerase can resume transcription of the downstream gene.</text>
</comment>
<comment type="function">
    <text evidence="1">RNA-directed RNA polymerase that catalyzes the replication of viral genomic RNA. The template is composed of the viral RNA tightly encapsidated by the nucleoprotein (N). The replicase mode is dependent on intracellular N protein concentration. In this mode, the polymerase replicates the whole viral genome without recognizing transcriptional signals, and the replicated genome is not caped or polyadenylated.</text>
</comment>
<comment type="catalytic activity">
    <reaction evidence="4">
        <text>RNA(n) + a ribonucleoside 5'-triphosphate = RNA(n+1) + diphosphate</text>
        <dbReference type="Rhea" id="RHEA:21248"/>
        <dbReference type="Rhea" id="RHEA-COMP:14527"/>
        <dbReference type="Rhea" id="RHEA-COMP:17342"/>
        <dbReference type="ChEBI" id="CHEBI:33019"/>
        <dbReference type="ChEBI" id="CHEBI:61557"/>
        <dbReference type="ChEBI" id="CHEBI:140395"/>
        <dbReference type="EC" id="2.7.7.48"/>
    </reaction>
</comment>
<comment type="catalytic activity">
    <reaction evidence="1">
        <text>a 5'-end (5'-triphosphoguanosine)-adenylyl-adenylyl-cytidylyl-adenosine in mRNA + 2 S-adenosyl-L-methionine = a 5'-end (N(7)-methyl 5'-triphosphoguanosine)-(2'-O-methyladenylyl)-adenylyl-cytidylyl-adenosine in mRNA + 2 S-adenosyl-L-homocysteine + H(+)</text>
        <dbReference type="Rhea" id="RHEA:65376"/>
        <dbReference type="Rhea" id="RHEA-COMP:16797"/>
        <dbReference type="Rhea" id="RHEA-COMP:16798"/>
        <dbReference type="ChEBI" id="CHEBI:15378"/>
        <dbReference type="ChEBI" id="CHEBI:57856"/>
        <dbReference type="ChEBI" id="CHEBI:59789"/>
        <dbReference type="ChEBI" id="CHEBI:156483"/>
        <dbReference type="ChEBI" id="CHEBI:156484"/>
        <dbReference type="EC" id="2.1.1.375"/>
    </reaction>
</comment>
<comment type="catalytic activity">
    <reaction evidence="1">
        <text>a 5'-end (5'-triphosphoguanosine)-adenylyl-adenylyl-cytidylyl-adenosine in mRNA + S-adenosyl-L-methionine = a 5'-end (5'-triphosphoguanosine)-(2'-O-methyladenylyl)-adenylyl-cytidylyl-adenosine in mRNA + S-adenosyl-L-homocysteine + H(+)</text>
        <dbReference type="Rhea" id="RHEA:65380"/>
        <dbReference type="Rhea" id="RHEA-COMP:16797"/>
        <dbReference type="Rhea" id="RHEA-COMP:16801"/>
        <dbReference type="ChEBI" id="CHEBI:15378"/>
        <dbReference type="ChEBI" id="CHEBI:57856"/>
        <dbReference type="ChEBI" id="CHEBI:59789"/>
        <dbReference type="ChEBI" id="CHEBI:156482"/>
        <dbReference type="ChEBI" id="CHEBI:156484"/>
    </reaction>
</comment>
<comment type="catalytic activity">
    <reaction evidence="2">
        <text>a 5'-end triphospho-adenylyl-adenylyl-cytidylyl-adenosine in mRNA + GDP + H(+) = a 5'-end (5'-triphosphoguanosine)-adenylyl-adenylyl-cytidylyl-adenosine in mRNA + diphosphate</text>
        <dbReference type="Rhea" id="RHEA:65436"/>
        <dbReference type="Rhea" id="RHEA-COMP:16797"/>
        <dbReference type="Rhea" id="RHEA-COMP:16799"/>
        <dbReference type="ChEBI" id="CHEBI:15378"/>
        <dbReference type="ChEBI" id="CHEBI:33019"/>
        <dbReference type="ChEBI" id="CHEBI:58189"/>
        <dbReference type="ChEBI" id="CHEBI:156484"/>
        <dbReference type="ChEBI" id="CHEBI:156503"/>
        <dbReference type="EC" id="2.7.7.88"/>
    </reaction>
</comment>
<comment type="catalytic activity">
    <reaction evidence="1">
        <text>a 5'-end (5'-triphosphoguanosine)-(2'-O-methyladenylyl)-adenylyl-cytidylyl-adenosine in mRNA + S-adenosyl-L-methionine = a 5'-end (N(7)-methyl 5'-triphosphoguanosine)-(2'-O-methyladenylyl)-adenylyl-cytidylyl-adenosine in mRNA + S-adenosyl-L-homocysteine</text>
        <dbReference type="Rhea" id="RHEA:65440"/>
        <dbReference type="Rhea" id="RHEA-COMP:16798"/>
        <dbReference type="Rhea" id="RHEA-COMP:16801"/>
        <dbReference type="ChEBI" id="CHEBI:57856"/>
        <dbReference type="ChEBI" id="CHEBI:59789"/>
        <dbReference type="ChEBI" id="CHEBI:156482"/>
        <dbReference type="ChEBI" id="CHEBI:156483"/>
    </reaction>
</comment>
<comment type="catalytic activity">
    <reaction evidence="2">
        <text>GTP + H2O = GDP + phosphate + H(+)</text>
        <dbReference type="Rhea" id="RHEA:19669"/>
        <dbReference type="ChEBI" id="CHEBI:15377"/>
        <dbReference type="ChEBI" id="CHEBI:15378"/>
        <dbReference type="ChEBI" id="CHEBI:37565"/>
        <dbReference type="ChEBI" id="CHEBI:43474"/>
        <dbReference type="ChEBI" id="CHEBI:58189"/>
    </reaction>
</comment>
<comment type="subunit">
    <text evidence="1">May form homodimer. Interacts with the P protein.</text>
</comment>
<comment type="subcellular location">
    <subcellularLocation>
        <location evidence="1">Virion</location>
    </subcellularLocation>
    <subcellularLocation>
        <location evidence="1">Host cytoplasm</location>
    </subcellularLocation>
    <text evidence="1">L and P are packaged asymmetrically towards the blunt end of the virus.</text>
</comment>
<comment type="similarity">
    <text evidence="6">Belongs to the rhabdoviridae protein L family.</text>
</comment>
<keyword id="KW-0067">ATP-binding</keyword>
<keyword id="KW-1035">Host cytoplasm</keyword>
<keyword id="KW-0378">Hydrolase</keyword>
<keyword id="KW-0489">Methyltransferase</keyword>
<keyword id="KW-0506">mRNA capping</keyword>
<keyword id="KW-0507">mRNA processing</keyword>
<keyword id="KW-0511">Multifunctional enzyme</keyword>
<keyword id="KW-0547">Nucleotide-binding</keyword>
<keyword id="KW-0548">Nucleotidyltransferase</keyword>
<keyword id="KW-1185">Reference proteome</keyword>
<keyword id="KW-0696">RNA-directed RNA polymerase</keyword>
<keyword id="KW-0949">S-adenosyl-L-methionine</keyword>
<keyword id="KW-0808">Transferase</keyword>
<keyword id="KW-0693">Viral RNA replication</keyword>
<keyword id="KW-0946">Virion</keyword>
<feature type="chain" id="PRO_0000282898" description="RNA-directed RNA polymerase L">
    <location>
        <begin position="1"/>
        <end position="1986"/>
    </location>
</feature>
<feature type="domain" description="RdRp catalytic" evidence="4">
    <location>
        <begin position="560"/>
        <end position="757"/>
    </location>
</feature>
<feature type="domain" description="Mononegavirus-type SAM-dependent 2'-O-MTase" evidence="5">
    <location>
        <begin position="1592"/>
        <end position="1788"/>
    </location>
</feature>
<feature type="binding site" evidence="3">
    <location>
        <begin position="1619"/>
        <end position="1628"/>
    </location>
    <ligand>
        <name>ATP</name>
        <dbReference type="ChEBI" id="CHEBI:30616"/>
    </ligand>
</feature>
<evidence type="ECO:0000250" key="1">
    <source>
        <dbReference type="UniProtKB" id="P03523"/>
    </source>
</evidence>
<evidence type="ECO:0000250" key="2">
    <source>
        <dbReference type="UniProtKB" id="P28887"/>
    </source>
</evidence>
<evidence type="ECO:0000255" key="3"/>
<evidence type="ECO:0000255" key="4">
    <source>
        <dbReference type="PROSITE-ProRule" id="PRU00539"/>
    </source>
</evidence>
<evidence type="ECO:0000255" key="5">
    <source>
        <dbReference type="PROSITE-ProRule" id="PRU00923"/>
    </source>
</evidence>
<evidence type="ECO:0000305" key="6"/>
<protein>
    <recommendedName>
        <fullName>RNA-directed RNA polymerase L</fullName>
        <shortName>Protein L</shortName>
    </recommendedName>
    <alternativeName>
        <fullName>Large structural protein</fullName>
    </alternativeName>
    <alternativeName>
        <fullName>Replicase</fullName>
    </alternativeName>
    <alternativeName>
        <fullName>Transcriptase</fullName>
    </alternativeName>
    <domain>
        <recommendedName>
            <fullName>RNA-directed RNA polymerase</fullName>
            <ecNumber evidence="2">2.7.7.48</ecNumber>
        </recommendedName>
    </domain>
    <domain>
        <recommendedName>
            <fullName evidence="1">GTP phosphohydrolase</fullName>
            <ecNumber evidence="1">3.6.1.-</ecNumber>
        </recommendedName>
    </domain>
    <domain>
        <recommendedName>
            <fullName evidence="6">GDP polyribonucleotidyltransferase</fullName>
            <ecNumber evidence="1">2.7.7.88</ecNumber>
        </recommendedName>
        <alternativeName>
            <fullName evidence="6">PRNTase</fullName>
        </alternativeName>
    </domain>
    <domain>
        <recommendedName>
            <fullName evidence="6">mRNA cap methyltransferase</fullName>
            <ecNumber evidence="1">2.1.1.375</ecNumber>
        </recommendedName>
        <alternativeName>
            <fullName evidence="1">mRNA (guanine-N(7)-)-methyltransferase</fullName>
            <shortName evidence="1">G-N7-MTase</shortName>
        </alternativeName>
        <alternativeName>
            <fullName evidence="1">mRNA (nucleoside-2'-O-)-methyltransferase</fullName>
            <shortName evidence="1">N1-2'-O-MTase</shortName>
        </alternativeName>
    </domain>
</protein>
<proteinExistence type="inferred from homology"/>
<accession>Q82685</accession>